<sequence>MEPAEQPSELVSAEGRNRKAVLCQRCGSRVLQPGTALFSRRQLFLPSMRKKPALSDGSNPDGDLLQEHWLVEDMFIFENVGFTKDVGNIKFLVCADCEIGPIGWHCLDDKNSFYVALERVSHE</sequence>
<feature type="chain" id="PRO_0000174174" description="Guanine nucleotide exchange factor MSS4">
    <location>
        <begin position="1"/>
        <end position="123"/>
    </location>
</feature>
<feature type="domain" description="MSS4" evidence="1">
    <location>
        <begin position="9"/>
        <end position="123"/>
    </location>
</feature>
<feature type="binding site" evidence="1">
    <location>
        <position position="23"/>
    </location>
    <ligand>
        <name>Zn(2+)</name>
        <dbReference type="ChEBI" id="CHEBI:29105"/>
    </ligand>
</feature>
<feature type="binding site" evidence="1">
    <location>
        <position position="26"/>
    </location>
    <ligand>
        <name>Zn(2+)</name>
        <dbReference type="ChEBI" id="CHEBI:29105"/>
    </ligand>
</feature>
<feature type="binding site" evidence="1">
    <location>
        <position position="94"/>
    </location>
    <ligand>
        <name>Zn(2+)</name>
        <dbReference type="ChEBI" id="CHEBI:29105"/>
    </ligand>
</feature>
<feature type="binding site" evidence="1">
    <location>
        <position position="97"/>
    </location>
    <ligand>
        <name>Zn(2+)</name>
        <dbReference type="ChEBI" id="CHEBI:29105"/>
    </ligand>
</feature>
<feature type="modified residue" description="N-acetylmethionine" evidence="5 6">
    <location>
        <position position="1"/>
    </location>
</feature>
<feature type="sequence conflict" description="In Ref. 1; AAB34955." evidence="4" ref="1">
    <original>EQ</original>
    <variation>DE</variation>
    <location>
        <begin position="5"/>
        <end position="6"/>
    </location>
</feature>
<feature type="strand" evidence="7">
    <location>
        <begin position="15"/>
        <end position="22"/>
    </location>
</feature>
<feature type="turn" evidence="7">
    <location>
        <begin position="24"/>
        <end position="26"/>
    </location>
</feature>
<feature type="strand" evidence="7">
    <location>
        <begin position="29"/>
        <end position="31"/>
    </location>
</feature>
<feature type="strand" evidence="7">
    <location>
        <begin position="37"/>
        <end position="39"/>
    </location>
</feature>
<feature type="strand" evidence="7">
    <location>
        <begin position="43"/>
        <end position="46"/>
    </location>
</feature>
<feature type="strand" evidence="7">
    <location>
        <begin position="62"/>
        <end position="65"/>
    </location>
</feature>
<feature type="strand" evidence="7">
    <location>
        <begin position="68"/>
        <end position="72"/>
    </location>
</feature>
<feature type="helix" evidence="7">
    <location>
        <begin position="74"/>
        <end position="76"/>
    </location>
</feature>
<feature type="strand" evidence="7">
    <location>
        <begin position="78"/>
        <end position="83"/>
    </location>
</feature>
<feature type="strand" evidence="7">
    <location>
        <begin position="89"/>
        <end position="93"/>
    </location>
</feature>
<feature type="turn" evidence="7">
    <location>
        <begin position="95"/>
        <end position="97"/>
    </location>
</feature>
<feature type="strand" evidence="7">
    <location>
        <begin position="103"/>
        <end position="106"/>
    </location>
</feature>
<feature type="strand" evidence="7">
    <location>
        <begin position="113"/>
        <end position="116"/>
    </location>
</feature>
<feature type="helix" evidence="7">
    <location>
        <begin position="117"/>
        <end position="119"/>
    </location>
</feature>
<feature type="strand" evidence="7">
    <location>
        <begin position="120"/>
        <end position="123"/>
    </location>
</feature>
<reference key="1">
    <citation type="journal article" date="1995" name="Biochemistry">
        <title>Cloning, Zn2+ binding, and structural characterization of the guanine nucleotide exchange factor human Mss4.</title>
        <authorList>
            <person name="Yu H."/>
            <person name="Schreiber S.L."/>
        </authorList>
    </citation>
    <scope>NUCLEOTIDE SEQUENCE [MRNA]</scope>
    <source>
        <tissue>Brain</tissue>
    </source>
</reference>
<reference key="2">
    <citation type="journal article" date="1997" name="Genomics">
        <title>Cloning of novel transcripts of the human guanine-nucleotide-exchange factor Mss4: in situ chromosomal mapping and expression in pancreatic cancer.</title>
        <authorList>
            <person name="Mueller-Pillasch F."/>
            <person name="Zimmerhackl F."/>
            <person name="Lacher U."/>
            <person name="Schultz N."/>
            <person name="Hameister H."/>
            <person name="Varga G."/>
            <person name="Friess H."/>
            <person name="Buechler M."/>
            <person name="Adler G."/>
            <person name="Gress T.M."/>
        </authorList>
    </citation>
    <scope>NUCLEOTIDE SEQUENCE [MRNA]</scope>
</reference>
<reference key="3">
    <citation type="submission" date="2003-05" db="EMBL/GenBank/DDBJ databases">
        <title>Cloning of human full-length CDSs in BD Creator(TM) system donor vector.</title>
        <authorList>
            <person name="Kalnine N."/>
            <person name="Chen X."/>
            <person name="Rolfs A."/>
            <person name="Halleck A."/>
            <person name="Hines L."/>
            <person name="Eisenstein S."/>
            <person name="Koundinya M."/>
            <person name="Raphael J."/>
            <person name="Moreira D."/>
            <person name="Kelley T."/>
            <person name="LaBaer J."/>
            <person name="Lin Y."/>
            <person name="Phelan M."/>
            <person name="Farmer A."/>
        </authorList>
    </citation>
    <scope>NUCLEOTIDE SEQUENCE [LARGE SCALE MRNA]</scope>
</reference>
<reference key="4">
    <citation type="journal article" date="2004" name="Nat. Genet.">
        <title>Complete sequencing and characterization of 21,243 full-length human cDNAs.</title>
        <authorList>
            <person name="Ota T."/>
            <person name="Suzuki Y."/>
            <person name="Nishikawa T."/>
            <person name="Otsuki T."/>
            <person name="Sugiyama T."/>
            <person name="Irie R."/>
            <person name="Wakamatsu A."/>
            <person name="Hayashi K."/>
            <person name="Sato H."/>
            <person name="Nagai K."/>
            <person name="Kimura K."/>
            <person name="Makita H."/>
            <person name="Sekine M."/>
            <person name="Obayashi M."/>
            <person name="Nishi T."/>
            <person name="Shibahara T."/>
            <person name="Tanaka T."/>
            <person name="Ishii S."/>
            <person name="Yamamoto J."/>
            <person name="Saito K."/>
            <person name="Kawai Y."/>
            <person name="Isono Y."/>
            <person name="Nakamura Y."/>
            <person name="Nagahari K."/>
            <person name="Murakami K."/>
            <person name="Yasuda T."/>
            <person name="Iwayanagi T."/>
            <person name="Wagatsuma M."/>
            <person name="Shiratori A."/>
            <person name="Sudo H."/>
            <person name="Hosoiri T."/>
            <person name="Kaku Y."/>
            <person name="Kodaira H."/>
            <person name="Kondo H."/>
            <person name="Sugawara M."/>
            <person name="Takahashi M."/>
            <person name="Kanda K."/>
            <person name="Yokoi T."/>
            <person name="Furuya T."/>
            <person name="Kikkawa E."/>
            <person name="Omura Y."/>
            <person name="Abe K."/>
            <person name="Kamihara K."/>
            <person name="Katsuta N."/>
            <person name="Sato K."/>
            <person name="Tanikawa M."/>
            <person name="Yamazaki M."/>
            <person name="Ninomiya K."/>
            <person name="Ishibashi T."/>
            <person name="Yamashita H."/>
            <person name="Murakawa K."/>
            <person name="Fujimori K."/>
            <person name="Tanai H."/>
            <person name="Kimata M."/>
            <person name="Watanabe M."/>
            <person name="Hiraoka S."/>
            <person name="Chiba Y."/>
            <person name="Ishida S."/>
            <person name="Ono Y."/>
            <person name="Takiguchi S."/>
            <person name="Watanabe S."/>
            <person name="Yosida M."/>
            <person name="Hotuta T."/>
            <person name="Kusano J."/>
            <person name="Kanehori K."/>
            <person name="Takahashi-Fujii A."/>
            <person name="Hara H."/>
            <person name="Tanase T.-O."/>
            <person name="Nomura Y."/>
            <person name="Togiya S."/>
            <person name="Komai F."/>
            <person name="Hara R."/>
            <person name="Takeuchi K."/>
            <person name="Arita M."/>
            <person name="Imose N."/>
            <person name="Musashino K."/>
            <person name="Yuuki H."/>
            <person name="Oshima A."/>
            <person name="Sasaki N."/>
            <person name="Aotsuka S."/>
            <person name="Yoshikawa Y."/>
            <person name="Matsunawa H."/>
            <person name="Ichihara T."/>
            <person name="Shiohata N."/>
            <person name="Sano S."/>
            <person name="Moriya S."/>
            <person name="Momiyama H."/>
            <person name="Satoh N."/>
            <person name="Takami S."/>
            <person name="Terashima Y."/>
            <person name="Suzuki O."/>
            <person name="Nakagawa S."/>
            <person name="Senoh A."/>
            <person name="Mizoguchi H."/>
            <person name="Goto Y."/>
            <person name="Shimizu F."/>
            <person name="Wakebe H."/>
            <person name="Hishigaki H."/>
            <person name="Watanabe T."/>
            <person name="Sugiyama A."/>
            <person name="Takemoto M."/>
            <person name="Kawakami B."/>
            <person name="Yamazaki M."/>
            <person name="Watanabe K."/>
            <person name="Kumagai A."/>
            <person name="Itakura S."/>
            <person name="Fukuzumi Y."/>
            <person name="Fujimori Y."/>
            <person name="Komiyama M."/>
            <person name="Tashiro H."/>
            <person name="Tanigami A."/>
            <person name="Fujiwara T."/>
            <person name="Ono T."/>
            <person name="Yamada K."/>
            <person name="Fujii Y."/>
            <person name="Ozaki K."/>
            <person name="Hirao M."/>
            <person name="Ohmori Y."/>
            <person name="Kawabata A."/>
            <person name="Hikiji T."/>
            <person name="Kobatake N."/>
            <person name="Inagaki H."/>
            <person name="Ikema Y."/>
            <person name="Okamoto S."/>
            <person name="Okitani R."/>
            <person name="Kawakami T."/>
            <person name="Noguchi S."/>
            <person name="Itoh T."/>
            <person name="Shigeta K."/>
            <person name="Senba T."/>
            <person name="Matsumura K."/>
            <person name="Nakajima Y."/>
            <person name="Mizuno T."/>
            <person name="Morinaga M."/>
            <person name="Sasaki M."/>
            <person name="Togashi T."/>
            <person name="Oyama M."/>
            <person name="Hata H."/>
            <person name="Watanabe M."/>
            <person name="Komatsu T."/>
            <person name="Mizushima-Sugano J."/>
            <person name="Satoh T."/>
            <person name="Shirai Y."/>
            <person name="Takahashi Y."/>
            <person name="Nakagawa K."/>
            <person name="Okumura K."/>
            <person name="Nagase T."/>
            <person name="Nomura N."/>
            <person name="Kikuchi H."/>
            <person name="Masuho Y."/>
            <person name="Yamashita R."/>
            <person name="Nakai K."/>
            <person name="Yada T."/>
            <person name="Nakamura Y."/>
            <person name="Ohara O."/>
            <person name="Isogai T."/>
            <person name="Sugano S."/>
        </authorList>
    </citation>
    <scope>NUCLEOTIDE SEQUENCE [LARGE SCALE MRNA]</scope>
    <source>
        <tissue>Spleen</tissue>
    </source>
</reference>
<reference key="5">
    <citation type="submission" date="2005-07" db="EMBL/GenBank/DDBJ databases">
        <authorList>
            <person name="Mural R.J."/>
            <person name="Istrail S."/>
            <person name="Sutton G.G."/>
            <person name="Florea L."/>
            <person name="Halpern A.L."/>
            <person name="Mobarry C.M."/>
            <person name="Lippert R."/>
            <person name="Walenz B."/>
            <person name="Shatkay H."/>
            <person name="Dew I."/>
            <person name="Miller J.R."/>
            <person name="Flanigan M.J."/>
            <person name="Edwards N.J."/>
            <person name="Bolanos R."/>
            <person name="Fasulo D."/>
            <person name="Halldorsson B.V."/>
            <person name="Hannenhalli S."/>
            <person name="Turner R."/>
            <person name="Yooseph S."/>
            <person name="Lu F."/>
            <person name="Nusskern D.R."/>
            <person name="Shue B.C."/>
            <person name="Zheng X.H."/>
            <person name="Zhong F."/>
            <person name="Delcher A.L."/>
            <person name="Huson D.H."/>
            <person name="Kravitz S.A."/>
            <person name="Mouchard L."/>
            <person name="Reinert K."/>
            <person name="Remington K.A."/>
            <person name="Clark A.G."/>
            <person name="Waterman M.S."/>
            <person name="Eichler E.E."/>
            <person name="Adams M.D."/>
            <person name="Hunkapiller M.W."/>
            <person name="Myers E.W."/>
            <person name="Venter J.C."/>
        </authorList>
    </citation>
    <scope>NUCLEOTIDE SEQUENCE [LARGE SCALE GENOMIC DNA]</scope>
</reference>
<reference key="6">
    <citation type="journal article" date="2004" name="Genome Res.">
        <title>The status, quality, and expansion of the NIH full-length cDNA project: the Mammalian Gene Collection (MGC).</title>
        <authorList>
            <consortium name="The MGC Project Team"/>
        </authorList>
    </citation>
    <scope>NUCLEOTIDE SEQUENCE [LARGE SCALE MRNA]</scope>
    <source>
        <tissue>Brain</tissue>
        <tissue>Prostate</tissue>
    </source>
</reference>
<reference key="7">
    <citation type="journal article" date="2011" name="BMC Syst. Biol.">
        <title>Initial characterization of the human central proteome.</title>
        <authorList>
            <person name="Burkard T.R."/>
            <person name="Planyavsky M."/>
            <person name="Kaupe I."/>
            <person name="Breitwieser F.P."/>
            <person name="Buerckstuemmer T."/>
            <person name="Bennett K.L."/>
            <person name="Superti-Furga G."/>
            <person name="Colinge J."/>
        </authorList>
    </citation>
    <scope>IDENTIFICATION BY MASS SPECTROMETRY [LARGE SCALE ANALYSIS]</scope>
</reference>
<reference key="8">
    <citation type="journal article" date="2012" name="Mol. Cell. Proteomics">
        <title>Comparative large-scale characterisation of plant vs. mammal proteins reveals similar and idiosyncratic N-alpha acetylation features.</title>
        <authorList>
            <person name="Bienvenut W.V."/>
            <person name="Sumpton D."/>
            <person name="Martinez A."/>
            <person name="Lilla S."/>
            <person name="Espagne C."/>
            <person name="Meinnel T."/>
            <person name="Giglione C."/>
        </authorList>
    </citation>
    <scope>ACETYLATION [LARGE SCALE ANALYSIS] AT MET-1</scope>
    <scope>IDENTIFICATION BY MASS SPECTROMETRY [LARGE SCALE ANALYSIS]</scope>
</reference>
<reference key="9">
    <citation type="journal article" date="2012" name="Proc. Natl. Acad. Sci. U.S.A.">
        <title>N-terminal acetylome analyses and functional insights of the N-terminal acetyltransferase NatB.</title>
        <authorList>
            <person name="Van Damme P."/>
            <person name="Lasa M."/>
            <person name="Polevoda B."/>
            <person name="Gazquez C."/>
            <person name="Elosegui-Artola A."/>
            <person name="Kim D.S."/>
            <person name="De Juan-Pardo E."/>
            <person name="Demeyer K."/>
            <person name="Hole K."/>
            <person name="Larrea E."/>
            <person name="Timmerman E."/>
            <person name="Prieto J."/>
            <person name="Arnesen T."/>
            <person name="Sherman F."/>
            <person name="Gevaert K."/>
            <person name="Aldabe R."/>
        </authorList>
    </citation>
    <scope>ACETYLATION [LARGE SCALE ANALYSIS] AT MET-1</scope>
    <scope>IDENTIFICATION BY MASS SPECTROMETRY [LARGE SCALE ANALYSIS]</scope>
</reference>
<reference key="10">
    <citation type="journal article" date="2019" name="Cell Host Microbe">
        <title>Systematic Identification of Host Cell Regulators of Legionella pneumophila Pathogenesis Using a Genome-wide CRISPR Screen.</title>
        <authorList>
            <person name="Jeng E.E."/>
            <person name="Bhadkamkar V."/>
            <person name="Ibe N.U."/>
            <person name="Gause H."/>
            <person name="Jiang L."/>
            <person name="Chan J."/>
            <person name="Jian R."/>
            <person name="Jimenez-Morales D."/>
            <person name="Stevenson E."/>
            <person name="Krogan N.J."/>
            <person name="Swaney D.L."/>
            <person name="Snyder M.P."/>
            <person name="Mukherjee S."/>
            <person name="Bassik M.C."/>
        </authorList>
    </citation>
    <scope>FUNCTION</scope>
</reference>
<reference key="11">
    <citation type="journal article" date="1995" name="Nature">
        <title>Structure of guanine-nucleotide-exchange factor human Mss4 and identification of its Rab-interacting surface.</title>
        <authorList>
            <person name="Yu H."/>
            <person name="Schreiber S.L."/>
        </authorList>
    </citation>
    <scope>STRUCTURE BY NMR</scope>
</reference>
<reference key="12">
    <citation type="journal article" date="2006" name="EMBO J.">
        <title>Nucleotide exchange via local protein unfolding--structure of Rab8 in complex with MSS4.</title>
        <authorList>
            <person name="Itzen A."/>
            <person name="Pylypenko O."/>
            <person name="Goody R.S."/>
            <person name="Alexandrov K."/>
            <person name="Rak A."/>
        </authorList>
    </citation>
    <scope>X-RAY CRYSTALLOGRAPHY (2.0 ANGSTROMS) OF 11-123 IN COMPLEX WITH RAB8A</scope>
    <scope>INTERACTION WITH RAB8A</scope>
</reference>
<organism>
    <name type="scientific">Homo sapiens</name>
    <name type="common">Human</name>
    <dbReference type="NCBI Taxonomy" id="9606"/>
    <lineage>
        <taxon>Eukaryota</taxon>
        <taxon>Metazoa</taxon>
        <taxon>Chordata</taxon>
        <taxon>Craniata</taxon>
        <taxon>Vertebrata</taxon>
        <taxon>Euteleostomi</taxon>
        <taxon>Mammalia</taxon>
        <taxon>Eutheria</taxon>
        <taxon>Euarchontoglires</taxon>
        <taxon>Primates</taxon>
        <taxon>Haplorrhini</taxon>
        <taxon>Catarrhini</taxon>
        <taxon>Hominidae</taxon>
        <taxon>Homo</taxon>
    </lineage>
</organism>
<proteinExistence type="evidence at protein level"/>
<evidence type="ECO:0000255" key="1">
    <source>
        <dbReference type="PROSITE-ProRule" id="PRU01132"/>
    </source>
</evidence>
<evidence type="ECO:0000269" key="2">
    <source>
    </source>
</evidence>
<evidence type="ECO:0000269" key="3">
    <source>
    </source>
</evidence>
<evidence type="ECO:0000305" key="4"/>
<evidence type="ECO:0007744" key="5">
    <source>
    </source>
</evidence>
<evidence type="ECO:0007744" key="6">
    <source>
    </source>
</evidence>
<evidence type="ECO:0007829" key="7">
    <source>
        <dbReference type="PDB" id="2FU5"/>
    </source>
</evidence>
<comment type="function">
    <text evidence="3">Guanine-nucleotide-releasing protein that acts on members of the SEC4/YPT1/RAB subfamily. Stimulates GDP release from both YPT1, RAB3A and RAB10, but is less active on these proteins than on the SEC4 protein (PubMed:31540829). Might play a general role in vesicular transport.</text>
</comment>
<comment type="subunit">
    <text evidence="2">Interacts with RAB8A.</text>
</comment>
<comment type="interaction">
    <interactant intactId="EBI-713992">
        <id>P47224</id>
    </interactant>
    <interactant intactId="EBI-711990">
        <id>O00303</id>
        <label>EIF3F</label>
    </interactant>
    <organismsDiffer>false</organismsDiffer>
    <experiments>5</experiments>
</comment>
<comment type="interaction">
    <interactant intactId="EBI-713992">
        <id>P47224</id>
    </interactant>
    <interactant intactId="EBI-14069005">
        <id>Q9BVG8-5</id>
        <label>KIFC3</label>
    </interactant>
    <organismsDiffer>false</organismsDiffer>
    <experiments>3</experiments>
</comment>
<comment type="interaction">
    <interactant intactId="EBI-713992">
        <id>P47224</id>
    </interactant>
    <interactant intactId="EBI-12036449">
        <id>Q659C4-6</id>
        <label>LARP1B</label>
    </interactant>
    <organismsDiffer>false</organismsDiffer>
    <experiments>3</experiments>
</comment>
<comment type="interaction">
    <interactant intactId="EBI-713992">
        <id>P47224</id>
    </interactant>
    <interactant intactId="EBI-5774016">
        <id>Q9NZU5</id>
        <label>LMCD1</label>
    </interactant>
    <organismsDiffer>false</organismsDiffer>
    <experiments>3</experiments>
</comment>
<comment type="interaction">
    <interactant intactId="EBI-713992">
        <id>P47224</id>
    </interactant>
    <interactant intactId="EBI-739832">
        <id>Q8TBB1</id>
        <label>LNX1</label>
    </interactant>
    <organismsDiffer>false</organismsDiffer>
    <experiments>3</experiments>
</comment>
<comment type="interaction">
    <interactant intactId="EBI-713992">
        <id>P47224</id>
    </interactant>
    <interactant intactId="EBI-18393842">
        <id>A0A087WWI0</id>
        <label>LRMDA</label>
    </interactant>
    <organismsDiffer>false</organismsDiffer>
    <experiments>3</experiments>
</comment>
<comment type="interaction">
    <interactant intactId="EBI-713992">
        <id>P47224</id>
    </interactant>
    <interactant intactId="EBI-1216080">
        <id>Q9Y250</id>
        <label>LZTS1</label>
    </interactant>
    <organismsDiffer>false</organismsDiffer>
    <experiments>3</experiments>
</comment>
<comment type="interaction">
    <interactant intactId="EBI-713992">
        <id>P47224</id>
    </interactant>
    <interactant intactId="EBI-4401710">
        <id>A4D1S5</id>
        <label>RAB19</label>
    </interactant>
    <organismsDiffer>false</organismsDiffer>
    <experiments>5</experiments>
</comment>
<comment type="interaction">
    <interactant intactId="EBI-713992">
        <id>P47224</id>
    </interactant>
    <interactant intactId="EBI-716845">
        <id>P62820</id>
        <label>RAB1A</label>
    </interactant>
    <organismsDiffer>false</organismsDiffer>
    <experiments>5</experiments>
</comment>
<comment type="interaction">
    <interactant intactId="EBI-713992">
        <id>P47224</id>
    </interactant>
    <interactant intactId="EBI-1045214">
        <id>Q9H0U4</id>
        <label>RAB1B</label>
    </interactant>
    <organismsDiffer>false</organismsDiffer>
    <experiments>10</experiments>
</comment>
<comment type="interaction">
    <interactant intactId="EBI-713992">
        <id>P47224</id>
    </interactant>
    <interactant intactId="EBI-1045943">
        <id>P20336</id>
        <label>RAB3A</label>
    </interactant>
    <organismsDiffer>false</organismsDiffer>
    <experiments>11</experiments>
</comment>
<comment type="interaction">
    <interactant intactId="EBI-713992">
        <id>P47224</id>
    </interactant>
    <interactant intactId="EBI-12894629">
        <id>P20337</id>
        <label>RAB3B</label>
    </interactant>
    <organismsDiffer>false</organismsDiffer>
    <experiments>7</experiments>
</comment>
<comment type="interaction">
    <interactant intactId="EBI-713992">
        <id>P47224</id>
    </interactant>
    <interactant intactId="EBI-4287022">
        <id>Q96E17</id>
        <label>RAB3C</label>
    </interactant>
    <organismsDiffer>false</organismsDiffer>
    <experiments>5</experiments>
</comment>
<comment type="interaction">
    <interactant intactId="EBI-713992">
        <id>P47224</id>
    </interactant>
    <interactant intactId="EBI-3386067">
        <id>O95716</id>
        <label>RAB3D</label>
    </interactant>
    <organismsDiffer>false</organismsDiffer>
    <experiments>3</experiments>
</comment>
<comment type="interaction">
    <interactant intactId="EBI-713992">
        <id>P47224</id>
    </interactant>
    <interactant intactId="EBI-722293">
        <id>P61006</id>
        <label>RAB8A</label>
    </interactant>
    <organismsDiffer>false</organismsDiffer>
    <experiments>8</experiments>
</comment>
<comment type="interaction">
    <interactant intactId="EBI-713992">
        <id>P47224</id>
    </interactant>
    <interactant intactId="EBI-367390">
        <id>Q8WWW0</id>
        <label>RASSF5</label>
    </interactant>
    <organismsDiffer>false</organismsDiffer>
    <experiments>3</experiments>
</comment>
<comment type="interaction">
    <interactant intactId="EBI-713992">
        <id>P47224</id>
    </interactant>
    <interactant intactId="EBI-307352">
        <id>Q04864</id>
        <label>REL</label>
    </interactant>
    <organismsDiffer>false</organismsDiffer>
    <experiments>3</experiments>
</comment>
<comment type="interaction">
    <interactant intactId="EBI-713992">
        <id>P47224</id>
    </interactant>
    <interactant intactId="EBI-533224">
        <id>P15884</id>
        <label>TCF4</label>
    </interactant>
    <organismsDiffer>false</organismsDiffer>
    <experiments>3</experiments>
</comment>
<comment type="interaction">
    <interactant intactId="EBI-713992">
        <id>P47224</id>
    </interactant>
    <interactant intactId="EBI-750109">
        <id>Q9NYB0</id>
        <label>TERF2IP</label>
    </interactant>
    <organismsDiffer>false</organismsDiffer>
    <experiments>2</experiments>
</comment>
<comment type="tissue specificity">
    <text>Ubiquitous.</text>
</comment>
<comment type="similarity">
    <text evidence="1">Belongs to the DSS4/MSS4 family.</text>
</comment>
<protein>
    <recommendedName>
        <fullName>Guanine nucleotide exchange factor MSS4</fullName>
    </recommendedName>
    <alternativeName>
        <fullName>Rab-interacting factor</fullName>
    </alternativeName>
</protein>
<gene>
    <name type="primary">RABIF</name>
    <name type="synonym">MSS4</name>
    <name type="synonym">RASGRF3</name>
</gene>
<name>MSS4_HUMAN</name>
<accession>P47224</accession>
<accession>B2R4P4</accession>
<accession>Q92992</accession>
<dbReference type="EMBL" id="S78873">
    <property type="protein sequence ID" value="AAB34955.1"/>
    <property type="molecule type" value="mRNA"/>
</dbReference>
<dbReference type="EMBL" id="U74324">
    <property type="protein sequence ID" value="AAB18264.1"/>
    <property type="molecule type" value="mRNA"/>
</dbReference>
<dbReference type="EMBL" id="BT007133">
    <property type="protein sequence ID" value="AAP35797.1"/>
    <property type="molecule type" value="mRNA"/>
</dbReference>
<dbReference type="EMBL" id="AK311900">
    <property type="protein sequence ID" value="BAG34841.1"/>
    <property type="molecule type" value="mRNA"/>
</dbReference>
<dbReference type="EMBL" id="CH471067">
    <property type="protein sequence ID" value="EAW91443.1"/>
    <property type="molecule type" value="Genomic_DNA"/>
</dbReference>
<dbReference type="EMBL" id="BC018488">
    <property type="protein sequence ID" value="AAH18488.1"/>
    <property type="molecule type" value="mRNA"/>
</dbReference>
<dbReference type="EMBL" id="BC037392">
    <property type="protein sequence ID" value="AAH37392.1"/>
    <property type="molecule type" value="mRNA"/>
</dbReference>
<dbReference type="CCDS" id="CCDS1428.1"/>
<dbReference type="PIR" id="I52427">
    <property type="entry name" value="I52427"/>
</dbReference>
<dbReference type="RefSeq" id="NP_002862.2">
    <property type="nucleotide sequence ID" value="NM_002871.4"/>
</dbReference>
<dbReference type="PDB" id="1FWQ">
    <property type="method" value="NMR"/>
    <property type="chains" value="A=1-123"/>
</dbReference>
<dbReference type="PDB" id="2FU5">
    <property type="method" value="X-ray"/>
    <property type="resolution" value="2.00 A"/>
    <property type="chains" value="A/B=11-123"/>
</dbReference>
<dbReference type="PDBsum" id="1FWQ"/>
<dbReference type="PDBsum" id="2FU5"/>
<dbReference type="SMR" id="P47224"/>
<dbReference type="BioGRID" id="111815">
    <property type="interactions" value="89"/>
</dbReference>
<dbReference type="FunCoup" id="P47224">
    <property type="interactions" value="1364"/>
</dbReference>
<dbReference type="IntAct" id="P47224">
    <property type="interactions" value="52"/>
</dbReference>
<dbReference type="MINT" id="P47224"/>
<dbReference type="STRING" id="9606.ENSP00000356231"/>
<dbReference type="iPTMnet" id="P47224"/>
<dbReference type="PhosphoSitePlus" id="P47224"/>
<dbReference type="BioMuta" id="RABIF"/>
<dbReference type="jPOST" id="P47224"/>
<dbReference type="MassIVE" id="P47224"/>
<dbReference type="PaxDb" id="9606-ENSP00000356231"/>
<dbReference type="PeptideAtlas" id="P47224"/>
<dbReference type="ProteomicsDB" id="55784"/>
<dbReference type="Pumba" id="P47224"/>
<dbReference type="TopDownProteomics" id="P47224"/>
<dbReference type="Antibodypedia" id="34532">
    <property type="antibodies" value="103 antibodies from 26 providers"/>
</dbReference>
<dbReference type="DNASU" id="5877"/>
<dbReference type="Ensembl" id="ENST00000367262.4">
    <property type="protein sequence ID" value="ENSP00000356231.3"/>
    <property type="gene ID" value="ENSG00000183155.5"/>
</dbReference>
<dbReference type="GeneID" id="5877"/>
<dbReference type="KEGG" id="hsa:5877"/>
<dbReference type="MANE-Select" id="ENST00000367262.4">
    <property type="protein sequence ID" value="ENSP00000356231.3"/>
    <property type="RefSeq nucleotide sequence ID" value="NM_002871.5"/>
    <property type="RefSeq protein sequence ID" value="NP_002862.2"/>
</dbReference>
<dbReference type="UCSC" id="uc001gyl.4">
    <property type="organism name" value="human"/>
</dbReference>
<dbReference type="AGR" id="HGNC:9797"/>
<dbReference type="CTD" id="5877"/>
<dbReference type="DisGeNET" id="5877"/>
<dbReference type="GeneCards" id="RABIF"/>
<dbReference type="HGNC" id="HGNC:9797">
    <property type="gene designation" value="RABIF"/>
</dbReference>
<dbReference type="HPA" id="ENSG00000183155">
    <property type="expression patterns" value="Low tissue specificity"/>
</dbReference>
<dbReference type="MIM" id="603417">
    <property type="type" value="gene"/>
</dbReference>
<dbReference type="neXtProt" id="NX_P47224"/>
<dbReference type="OpenTargets" id="ENSG00000183155"/>
<dbReference type="PharmGKB" id="PA34158"/>
<dbReference type="VEuPathDB" id="HostDB:ENSG00000183155"/>
<dbReference type="eggNOG" id="KOG4113">
    <property type="taxonomic scope" value="Eukaryota"/>
</dbReference>
<dbReference type="GeneTree" id="ENSGT00390000016889"/>
<dbReference type="HOGENOM" id="CLU_132754_0_0_1"/>
<dbReference type="InParanoid" id="P47224"/>
<dbReference type="OMA" id="VPLMMQK"/>
<dbReference type="OrthoDB" id="30840at2759"/>
<dbReference type="PAN-GO" id="P47224">
    <property type="GO annotations" value="5 GO annotations based on evolutionary models"/>
</dbReference>
<dbReference type="PhylomeDB" id="P47224"/>
<dbReference type="TreeFam" id="TF314029"/>
<dbReference type="PathwayCommons" id="P47224"/>
<dbReference type="SignaLink" id="P47224"/>
<dbReference type="BioGRID-ORCS" id="5877">
    <property type="hits" value="206 hits in 1167 CRISPR screens"/>
</dbReference>
<dbReference type="EvolutionaryTrace" id="P47224"/>
<dbReference type="GeneWiki" id="RABIF"/>
<dbReference type="GenomeRNAi" id="5877"/>
<dbReference type="Pharos" id="P47224">
    <property type="development level" value="Tbio"/>
</dbReference>
<dbReference type="PRO" id="PR:P47224"/>
<dbReference type="Proteomes" id="UP000005640">
    <property type="component" value="Chromosome 1"/>
</dbReference>
<dbReference type="RNAct" id="P47224">
    <property type="molecule type" value="protein"/>
</dbReference>
<dbReference type="Bgee" id="ENSG00000183155">
    <property type="expression patterns" value="Expressed in cervix squamous epithelium and 191 other cell types or tissues"/>
</dbReference>
<dbReference type="GO" id="GO:0005829">
    <property type="term" value="C:cytosol"/>
    <property type="evidence" value="ECO:0000318"/>
    <property type="project" value="GO_Central"/>
</dbReference>
<dbReference type="GO" id="GO:0016020">
    <property type="term" value="C:membrane"/>
    <property type="evidence" value="ECO:0000318"/>
    <property type="project" value="GO_Central"/>
</dbReference>
<dbReference type="GO" id="GO:0005085">
    <property type="term" value="F:guanyl-nucleotide exchange factor activity"/>
    <property type="evidence" value="ECO:0000318"/>
    <property type="project" value="GO_Central"/>
</dbReference>
<dbReference type="GO" id="GO:0008270">
    <property type="term" value="F:zinc ion binding"/>
    <property type="evidence" value="ECO:0000314"/>
    <property type="project" value="UniProtKB"/>
</dbReference>
<dbReference type="GO" id="GO:0061025">
    <property type="term" value="P:membrane fusion"/>
    <property type="evidence" value="ECO:0000304"/>
    <property type="project" value="ProtInc"/>
</dbReference>
<dbReference type="GO" id="GO:0006892">
    <property type="term" value="P:post-Golgi vesicle-mediated transport"/>
    <property type="evidence" value="ECO:0000318"/>
    <property type="project" value="GO_Central"/>
</dbReference>
<dbReference type="GO" id="GO:0015031">
    <property type="term" value="P:protein transport"/>
    <property type="evidence" value="ECO:0007669"/>
    <property type="project" value="UniProtKB-KW"/>
</dbReference>
<dbReference type="GO" id="GO:0007264">
    <property type="term" value="P:small GTPase-mediated signal transduction"/>
    <property type="evidence" value="ECO:0007669"/>
    <property type="project" value="InterPro"/>
</dbReference>
<dbReference type="CDD" id="cd00246">
    <property type="entry name" value="RabGEF"/>
    <property type="match status" value="1"/>
</dbReference>
<dbReference type="FunFam" id="2.170.150.10:FF:000004">
    <property type="entry name" value="Guanine nucleotide exchange factor MSS4"/>
    <property type="match status" value="1"/>
</dbReference>
<dbReference type="Gene3D" id="2.170.150.10">
    <property type="entry name" value="Metal Binding Protein, Guanine Nucleotide Exchange Factor, Chain A"/>
    <property type="match status" value="1"/>
</dbReference>
<dbReference type="InterPro" id="IPR007515">
    <property type="entry name" value="Mss4"/>
</dbReference>
<dbReference type="InterPro" id="IPR011057">
    <property type="entry name" value="Mss4-like_sf"/>
</dbReference>
<dbReference type="InterPro" id="IPR011323">
    <property type="entry name" value="Mss4/transl-control_tumour"/>
</dbReference>
<dbReference type="PANTHER" id="PTHR13276">
    <property type="entry name" value="GUANINE NUCLEOTIDE EXCHANGE FACTOR MSS4"/>
    <property type="match status" value="1"/>
</dbReference>
<dbReference type="PANTHER" id="PTHR13276:SF0">
    <property type="entry name" value="GUANINE NUCLEOTIDE EXCHANGE FACTOR MSS4"/>
    <property type="match status" value="1"/>
</dbReference>
<dbReference type="Pfam" id="PF04421">
    <property type="entry name" value="Mss4"/>
    <property type="match status" value="1"/>
</dbReference>
<dbReference type="SUPFAM" id="SSF51316">
    <property type="entry name" value="Mss4-like"/>
    <property type="match status" value="1"/>
</dbReference>
<dbReference type="PROSITE" id="PS51796">
    <property type="entry name" value="MSS4"/>
    <property type="match status" value="1"/>
</dbReference>
<keyword id="KW-0002">3D-structure</keyword>
<keyword id="KW-0007">Acetylation</keyword>
<keyword id="KW-0344">Guanine-nucleotide releasing factor</keyword>
<keyword id="KW-0479">Metal-binding</keyword>
<keyword id="KW-0653">Protein transport</keyword>
<keyword id="KW-1267">Proteomics identification</keyword>
<keyword id="KW-1185">Reference proteome</keyword>
<keyword id="KW-0813">Transport</keyword>
<keyword id="KW-0862">Zinc</keyword>